<feature type="chain" id="PRO_0000425923" description="Protein ORF1">
    <location>
        <begin position="1"/>
        <end position="112"/>
    </location>
</feature>
<feature type="transmembrane region" description="Helical" evidence="1">
    <location>
        <begin position="51"/>
        <end position="71"/>
    </location>
</feature>
<feature type="region of interest" description="Disordered" evidence="2">
    <location>
        <begin position="1"/>
        <end position="20"/>
    </location>
</feature>
<feature type="compositionally biased region" description="Low complexity" evidence="2">
    <location>
        <begin position="1"/>
        <end position="10"/>
    </location>
</feature>
<reference key="1">
    <citation type="journal article" date="2002" name="J. Gen. Virol.">
        <title>Genetic analysis of an adenovirus isolated from corn snake (Elaphe guttata) implies common origin with the members of the proposed new genus Atadenovirus.</title>
        <authorList>
            <person name="Farkas S.L."/>
            <person name="Benko M."/>
            <person name="Elo P.T."/>
            <person name="Ursu K."/>
            <person name="Dan A."/>
            <person name="Ahne W."/>
            <person name="Harrach B."/>
        </authorList>
    </citation>
    <scope>NUCLEOTIDE SEQUENCE [GENOMIC DNA]</scope>
</reference>
<sequence length="112" mass="12506">MEGTDWSGWGDDSDFPWPKGSRVTFPSYQLEDPPYAAPSDLDLVGKGHLHIAFVILIVSLFVLLLGVLLACHFLRRSLSPISVSSRCSPCRLFYDRCRPYTSLEKGVELSCV</sequence>
<organism>
    <name type="scientific">Snake adenovirus serotype 1</name>
    <name type="common">SnAdV-1</name>
    <dbReference type="NCBI Taxonomy" id="189830"/>
    <lineage>
        <taxon>Viruses</taxon>
        <taxon>Varidnaviria</taxon>
        <taxon>Bamfordvirae</taxon>
        <taxon>Preplasmiviricota</taxon>
        <taxon>Tectiliviricetes</taxon>
        <taxon>Rowavirales</taxon>
        <taxon>Adenoviridae</taxon>
        <taxon>Atadenovirus</taxon>
        <taxon>Snake atadenovirus A</taxon>
    </lineage>
</organism>
<organismHost>
    <name type="scientific">Pantherophis guttatus</name>
    <name type="common">Corn snake</name>
    <name type="synonym">Elaphe guttata</name>
    <dbReference type="NCBI Taxonomy" id="94885"/>
</organismHost>
<proteinExistence type="predicted"/>
<dbReference type="EMBL" id="DQ106414">
    <property type="protein sequence ID" value="ABA47250.1"/>
    <property type="molecule type" value="Genomic_DNA"/>
</dbReference>
<dbReference type="RefSeq" id="YP_001552267.1">
    <property type="nucleotide sequence ID" value="NC_009989.1"/>
</dbReference>
<dbReference type="GeneID" id="10973881"/>
<dbReference type="KEGG" id="vg:10973881"/>
<dbReference type="OrthoDB" id="41707at10239"/>
<dbReference type="Proteomes" id="UP000136605">
    <property type="component" value="Genome"/>
</dbReference>
<dbReference type="GO" id="GO:0033644">
    <property type="term" value="C:host cell membrane"/>
    <property type="evidence" value="ECO:0007669"/>
    <property type="project" value="UniProtKB-SubCell"/>
</dbReference>
<dbReference type="GO" id="GO:0016020">
    <property type="term" value="C:membrane"/>
    <property type="evidence" value="ECO:0007669"/>
    <property type="project" value="UniProtKB-KW"/>
</dbReference>
<comment type="subcellular location">
    <subcellularLocation>
        <location evidence="3">Host membrane</location>
        <topology evidence="3">Single-pass membrane protein</topology>
    </subcellularLocation>
</comment>
<accession>A9CBA0</accession>
<evidence type="ECO:0000255" key="1"/>
<evidence type="ECO:0000256" key="2">
    <source>
        <dbReference type="SAM" id="MobiDB-lite"/>
    </source>
</evidence>
<evidence type="ECO:0000305" key="3"/>
<keyword id="KW-1043">Host membrane</keyword>
<keyword id="KW-0472">Membrane</keyword>
<keyword id="KW-1185">Reference proteome</keyword>
<keyword id="KW-0812">Transmembrane</keyword>
<keyword id="KW-1133">Transmembrane helix</keyword>
<name>ORF1_ADES1</name>
<protein>
    <recommendedName>
        <fullName>Protein ORF1</fullName>
    </recommendedName>
</protein>